<protein>
    <recommendedName>
        <fullName evidence="1">Malate dehydrogenase</fullName>
        <ecNumber evidence="1">1.1.1.37</ecNumber>
    </recommendedName>
</protein>
<accession>A9EZV5</accession>
<comment type="function">
    <text evidence="1">Catalyzes the reversible oxidation of malate to oxaloacetate.</text>
</comment>
<comment type="catalytic activity">
    <reaction evidence="1">
        <text>(S)-malate + NAD(+) = oxaloacetate + NADH + H(+)</text>
        <dbReference type="Rhea" id="RHEA:21432"/>
        <dbReference type="ChEBI" id="CHEBI:15378"/>
        <dbReference type="ChEBI" id="CHEBI:15589"/>
        <dbReference type="ChEBI" id="CHEBI:16452"/>
        <dbReference type="ChEBI" id="CHEBI:57540"/>
        <dbReference type="ChEBI" id="CHEBI:57945"/>
        <dbReference type="EC" id="1.1.1.37"/>
    </reaction>
</comment>
<comment type="similarity">
    <text evidence="1">Belongs to the LDH/MDH superfamily. MDH type 3 family.</text>
</comment>
<sequence length="313" mass="33185">MANRRKIALIGAGNIGGELAALIARKELGDVVLFDIPQKTDFAKGKALDLEQNGAVLGYDASIKGTSSWADCAGADVLIVTAGIPRKPGQSRDDLVATNLPIIRSVADGAKEHCPNALVIVISNPIDAMVYEFKRRTGFPRERVLGMAGVLDSARFQLFLAREANVSVKDVRAMVLGGHGDDMVPIPSACTINGVRATELISKEKLDALIARTRKGGGEIVQLMGTSAYYAPASSAVAMAESYLLDQKRLLPVAAYLDGEYGYKDIFMGVPVILGGKGIEKIVELPLTAEEKEMLAKSAKSVQGITDVVKASS</sequence>
<keyword id="KW-0520">NAD</keyword>
<keyword id="KW-0560">Oxidoreductase</keyword>
<keyword id="KW-1185">Reference proteome</keyword>
<keyword id="KW-0816">Tricarboxylic acid cycle</keyword>
<dbReference type="EC" id="1.1.1.37" evidence="1"/>
<dbReference type="EMBL" id="AM746676">
    <property type="protein sequence ID" value="CAN91207.1"/>
    <property type="molecule type" value="Genomic_DNA"/>
</dbReference>
<dbReference type="RefSeq" id="WP_012233684.1">
    <property type="nucleotide sequence ID" value="NC_010162.1"/>
</dbReference>
<dbReference type="SMR" id="A9EZV5"/>
<dbReference type="STRING" id="448385.sce1050"/>
<dbReference type="KEGG" id="scl:sce1050"/>
<dbReference type="eggNOG" id="COG0039">
    <property type="taxonomic scope" value="Bacteria"/>
</dbReference>
<dbReference type="HOGENOM" id="CLU_045401_2_1_7"/>
<dbReference type="OrthoDB" id="9802969at2"/>
<dbReference type="BioCyc" id="SCEL448385:SCE_RS05485-MONOMER"/>
<dbReference type="Proteomes" id="UP000002139">
    <property type="component" value="Chromosome"/>
</dbReference>
<dbReference type="GO" id="GO:0004459">
    <property type="term" value="F:L-lactate dehydrogenase activity"/>
    <property type="evidence" value="ECO:0007669"/>
    <property type="project" value="TreeGrafter"/>
</dbReference>
<dbReference type="GO" id="GO:0030060">
    <property type="term" value="F:L-malate dehydrogenase (NAD+) activity"/>
    <property type="evidence" value="ECO:0007669"/>
    <property type="project" value="UniProtKB-UniRule"/>
</dbReference>
<dbReference type="GO" id="GO:0006089">
    <property type="term" value="P:lactate metabolic process"/>
    <property type="evidence" value="ECO:0007669"/>
    <property type="project" value="TreeGrafter"/>
</dbReference>
<dbReference type="GO" id="GO:0006099">
    <property type="term" value="P:tricarboxylic acid cycle"/>
    <property type="evidence" value="ECO:0007669"/>
    <property type="project" value="UniProtKB-UniRule"/>
</dbReference>
<dbReference type="CDD" id="cd01339">
    <property type="entry name" value="LDH-like_MDH"/>
    <property type="match status" value="1"/>
</dbReference>
<dbReference type="FunFam" id="3.40.50.720:FF:000018">
    <property type="entry name" value="Malate dehydrogenase"/>
    <property type="match status" value="1"/>
</dbReference>
<dbReference type="FunFam" id="3.90.110.10:FF:000004">
    <property type="entry name" value="Malate dehydrogenase"/>
    <property type="match status" value="1"/>
</dbReference>
<dbReference type="Gene3D" id="3.90.110.10">
    <property type="entry name" value="Lactate dehydrogenase/glycoside hydrolase, family 4, C-terminal"/>
    <property type="match status" value="1"/>
</dbReference>
<dbReference type="Gene3D" id="3.40.50.720">
    <property type="entry name" value="NAD(P)-binding Rossmann-like Domain"/>
    <property type="match status" value="1"/>
</dbReference>
<dbReference type="HAMAP" id="MF_00487">
    <property type="entry name" value="Malate_dehydrog_3"/>
    <property type="match status" value="1"/>
</dbReference>
<dbReference type="InterPro" id="IPR001557">
    <property type="entry name" value="L-lactate/malate_DH"/>
</dbReference>
<dbReference type="InterPro" id="IPR022383">
    <property type="entry name" value="Lactate/malate_DH_C"/>
</dbReference>
<dbReference type="InterPro" id="IPR001236">
    <property type="entry name" value="Lactate/malate_DH_N"/>
</dbReference>
<dbReference type="InterPro" id="IPR015955">
    <property type="entry name" value="Lactate_DH/Glyco_Ohase_4_C"/>
</dbReference>
<dbReference type="InterPro" id="IPR011275">
    <property type="entry name" value="Malate_DH_type3"/>
</dbReference>
<dbReference type="InterPro" id="IPR036291">
    <property type="entry name" value="NAD(P)-bd_dom_sf"/>
</dbReference>
<dbReference type="NCBIfam" id="TIGR01763">
    <property type="entry name" value="MalateDH_bact"/>
    <property type="match status" value="1"/>
</dbReference>
<dbReference type="NCBIfam" id="NF004863">
    <property type="entry name" value="PRK06223.1"/>
    <property type="match status" value="1"/>
</dbReference>
<dbReference type="PANTHER" id="PTHR43128">
    <property type="entry name" value="L-2-HYDROXYCARBOXYLATE DEHYDROGENASE (NAD(P)(+))"/>
    <property type="match status" value="1"/>
</dbReference>
<dbReference type="PANTHER" id="PTHR43128:SF16">
    <property type="entry name" value="L-LACTATE DEHYDROGENASE"/>
    <property type="match status" value="1"/>
</dbReference>
<dbReference type="Pfam" id="PF02866">
    <property type="entry name" value="Ldh_1_C"/>
    <property type="match status" value="1"/>
</dbReference>
<dbReference type="Pfam" id="PF00056">
    <property type="entry name" value="Ldh_1_N"/>
    <property type="match status" value="1"/>
</dbReference>
<dbReference type="PIRSF" id="PIRSF000102">
    <property type="entry name" value="Lac_mal_DH"/>
    <property type="match status" value="1"/>
</dbReference>
<dbReference type="PRINTS" id="PR00086">
    <property type="entry name" value="LLDHDRGNASE"/>
</dbReference>
<dbReference type="SUPFAM" id="SSF56327">
    <property type="entry name" value="LDH C-terminal domain-like"/>
    <property type="match status" value="1"/>
</dbReference>
<dbReference type="SUPFAM" id="SSF51735">
    <property type="entry name" value="NAD(P)-binding Rossmann-fold domains"/>
    <property type="match status" value="1"/>
</dbReference>
<organism>
    <name type="scientific">Sorangium cellulosum (strain So ce56)</name>
    <name type="common">Polyangium cellulosum (strain So ce56)</name>
    <dbReference type="NCBI Taxonomy" id="448385"/>
    <lineage>
        <taxon>Bacteria</taxon>
        <taxon>Pseudomonadati</taxon>
        <taxon>Myxococcota</taxon>
        <taxon>Polyangia</taxon>
        <taxon>Polyangiales</taxon>
        <taxon>Polyangiaceae</taxon>
        <taxon>Sorangium</taxon>
    </lineage>
</organism>
<proteinExistence type="inferred from homology"/>
<feature type="chain" id="PRO_1000081366" description="Malate dehydrogenase">
    <location>
        <begin position="1"/>
        <end position="313"/>
    </location>
</feature>
<feature type="active site" description="Proton acceptor" evidence="1">
    <location>
        <position position="179"/>
    </location>
</feature>
<feature type="binding site" evidence="1">
    <location>
        <begin position="11"/>
        <end position="16"/>
    </location>
    <ligand>
        <name>NAD(+)</name>
        <dbReference type="ChEBI" id="CHEBI:57540"/>
    </ligand>
</feature>
<feature type="binding site" evidence="1">
    <location>
        <position position="35"/>
    </location>
    <ligand>
        <name>NAD(+)</name>
        <dbReference type="ChEBI" id="CHEBI:57540"/>
    </ligand>
</feature>
<feature type="binding site" evidence="1">
    <location>
        <position position="86"/>
    </location>
    <ligand>
        <name>substrate</name>
    </ligand>
</feature>
<feature type="binding site" evidence="1">
    <location>
        <position position="92"/>
    </location>
    <ligand>
        <name>substrate</name>
    </ligand>
</feature>
<feature type="binding site" evidence="1">
    <location>
        <position position="99"/>
    </location>
    <ligand>
        <name>NAD(+)</name>
        <dbReference type="ChEBI" id="CHEBI:57540"/>
    </ligand>
</feature>
<feature type="binding site" evidence="1">
    <location>
        <begin position="122"/>
        <end position="124"/>
    </location>
    <ligand>
        <name>NAD(+)</name>
        <dbReference type="ChEBI" id="CHEBI:57540"/>
    </ligand>
</feature>
<feature type="binding site" evidence="1">
    <location>
        <position position="124"/>
    </location>
    <ligand>
        <name>substrate</name>
    </ligand>
</feature>
<feature type="binding site" evidence="1">
    <location>
        <position position="155"/>
    </location>
    <ligand>
        <name>substrate</name>
    </ligand>
</feature>
<name>MDH_SORC5</name>
<gene>
    <name evidence="1" type="primary">mdh</name>
    <name type="ordered locus">sce1050</name>
</gene>
<reference key="1">
    <citation type="journal article" date="2007" name="Nat. Biotechnol.">
        <title>Complete genome sequence of the myxobacterium Sorangium cellulosum.</title>
        <authorList>
            <person name="Schneiker S."/>
            <person name="Perlova O."/>
            <person name="Kaiser O."/>
            <person name="Gerth K."/>
            <person name="Alici A."/>
            <person name="Altmeyer M.O."/>
            <person name="Bartels D."/>
            <person name="Bekel T."/>
            <person name="Beyer S."/>
            <person name="Bode E."/>
            <person name="Bode H.B."/>
            <person name="Bolten C.J."/>
            <person name="Choudhuri J.V."/>
            <person name="Doss S."/>
            <person name="Elnakady Y.A."/>
            <person name="Frank B."/>
            <person name="Gaigalat L."/>
            <person name="Goesmann A."/>
            <person name="Groeger C."/>
            <person name="Gross F."/>
            <person name="Jelsbak L."/>
            <person name="Jelsbak L."/>
            <person name="Kalinowski J."/>
            <person name="Kegler C."/>
            <person name="Knauber T."/>
            <person name="Konietzny S."/>
            <person name="Kopp M."/>
            <person name="Krause L."/>
            <person name="Krug D."/>
            <person name="Linke B."/>
            <person name="Mahmud T."/>
            <person name="Martinez-Arias R."/>
            <person name="McHardy A.C."/>
            <person name="Merai M."/>
            <person name="Meyer F."/>
            <person name="Mormann S."/>
            <person name="Munoz-Dorado J."/>
            <person name="Perez J."/>
            <person name="Pradella S."/>
            <person name="Rachid S."/>
            <person name="Raddatz G."/>
            <person name="Rosenau F."/>
            <person name="Rueckert C."/>
            <person name="Sasse F."/>
            <person name="Scharfe M."/>
            <person name="Schuster S.C."/>
            <person name="Suen G."/>
            <person name="Treuner-Lange A."/>
            <person name="Velicer G.J."/>
            <person name="Vorholter F.-J."/>
            <person name="Weissman K.J."/>
            <person name="Welch R.D."/>
            <person name="Wenzel S.C."/>
            <person name="Whitworth D.E."/>
            <person name="Wilhelm S."/>
            <person name="Wittmann C."/>
            <person name="Bloecker H."/>
            <person name="Puehler A."/>
            <person name="Mueller R."/>
        </authorList>
    </citation>
    <scope>NUCLEOTIDE SEQUENCE [LARGE SCALE GENOMIC DNA]</scope>
    <source>
        <strain>So ce56</strain>
    </source>
</reference>
<evidence type="ECO:0000255" key="1">
    <source>
        <dbReference type="HAMAP-Rule" id="MF_00487"/>
    </source>
</evidence>